<dbReference type="EMBL" id="CP001344">
    <property type="protein sequence ID" value="ACL43848.1"/>
    <property type="molecule type" value="Genomic_DNA"/>
</dbReference>
<dbReference type="SMR" id="B8HPI7"/>
<dbReference type="STRING" id="395961.Cyan7425_1478"/>
<dbReference type="KEGG" id="cyn:Cyan7425_1478"/>
<dbReference type="eggNOG" id="COG0292">
    <property type="taxonomic scope" value="Bacteria"/>
</dbReference>
<dbReference type="HOGENOM" id="CLU_123265_0_1_3"/>
<dbReference type="OrthoDB" id="9808966at2"/>
<dbReference type="GO" id="GO:1990904">
    <property type="term" value="C:ribonucleoprotein complex"/>
    <property type="evidence" value="ECO:0007669"/>
    <property type="project" value="UniProtKB-KW"/>
</dbReference>
<dbReference type="GO" id="GO:0005840">
    <property type="term" value="C:ribosome"/>
    <property type="evidence" value="ECO:0007669"/>
    <property type="project" value="UniProtKB-KW"/>
</dbReference>
<dbReference type="GO" id="GO:0019843">
    <property type="term" value="F:rRNA binding"/>
    <property type="evidence" value="ECO:0007669"/>
    <property type="project" value="UniProtKB-UniRule"/>
</dbReference>
<dbReference type="GO" id="GO:0003735">
    <property type="term" value="F:structural constituent of ribosome"/>
    <property type="evidence" value="ECO:0007669"/>
    <property type="project" value="InterPro"/>
</dbReference>
<dbReference type="GO" id="GO:0000027">
    <property type="term" value="P:ribosomal large subunit assembly"/>
    <property type="evidence" value="ECO:0007669"/>
    <property type="project" value="UniProtKB-UniRule"/>
</dbReference>
<dbReference type="GO" id="GO:0006412">
    <property type="term" value="P:translation"/>
    <property type="evidence" value="ECO:0007669"/>
    <property type="project" value="InterPro"/>
</dbReference>
<dbReference type="CDD" id="cd07026">
    <property type="entry name" value="Ribosomal_L20"/>
    <property type="match status" value="1"/>
</dbReference>
<dbReference type="FunFam" id="1.10.1900.20:FF:000001">
    <property type="entry name" value="50S ribosomal protein L20"/>
    <property type="match status" value="1"/>
</dbReference>
<dbReference type="Gene3D" id="6.10.160.10">
    <property type="match status" value="1"/>
</dbReference>
<dbReference type="Gene3D" id="1.10.1900.20">
    <property type="entry name" value="Ribosomal protein L20"/>
    <property type="match status" value="1"/>
</dbReference>
<dbReference type="HAMAP" id="MF_00382">
    <property type="entry name" value="Ribosomal_bL20"/>
    <property type="match status" value="1"/>
</dbReference>
<dbReference type="InterPro" id="IPR005813">
    <property type="entry name" value="Ribosomal_bL20"/>
</dbReference>
<dbReference type="InterPro" id="IPR049946">
    <property type="entry name" value="RIBOSOMAL_L20_CS"/>
</dbReference>
<dbReference type="InterPro" id="IPR035566">
    <property type="entry name" value="Ribosomal_protein_bL20_C"/>
</dbReference>
<dbReference type="NCBIfam" id="TIGR01032">
    <property type="entry name" value="rplT_bact"/>
    <property type="match status" value="1"/>
</dbReference>
<dbReference type="PANTHER" id="PTHR10986">
    <property type="entry name" value="39S RIBOSOMAL PROTEIN L20"/>
    <property type="match status" value="1"/>
</dbReference>
<dbReference type="Pfam" id="PF00453">
    <property type="entry name" value="Ribosomal_L20"/>
    <property type="match status" value="1"/>
</dbReference>
<dbReference type="PRINTS" id="PR00062">
    <property type="entry name" value="RIBOSOMALL20"/>
</dbReference>
<dbReference type="SUPFAM" id="SSF74731">
    <property type="entry name" value="Ribosomal protein L20"/>
    <property type="match status" value="1"/>
</dbReference>
<dbReference type="PROSITE" id="PS00937">
    <property type="entry name" value="RIBOSOMAL_L20"/>
    <property type="match status" value="1"/>
</dbReference>
<keyword id="KW-0687">Ribonucleoprotein</keyword>
<keyword id="KW-0689">Ribosomal protein</keyword>
<keyword id="KW-0694">RNA-binding</keyword>
<keyword id="KW-0699">rRNA-binding</keyword>
<proteinExistence type="inferred from homology"/>
<evidence type="ECO:0000255" key="1">
    <source>
        <dbReference type="HAMAP-Rule" id="MF_00382"/>
    </source>
</evidence>
<evidence type="ECO:0000305" key="2"/>
<accession>B8HPI7</accession>
<protein>
    <recommendedName>
        <fullName evidence="1">Large ribosomal subunit protein bL20</fullName>
    </recommendedName>
    <alternativeName>
        <fullName evidence="2">50S ribosomal protein L20</fullName>
    </alternativeName>
</protein>
<reference key="1">
    <citation type="journal article" date="2011" name="MBio">
        <title>Novel metabolic attributes of the genus Cyanothece, comprising a group of unicellular nitrogen-fixing Cyanobacteria.</title>
        <authorList>
            <person name="Bandyopadhyay A."/>
            <person name="Elvitigala T."/>
            <person name="Welsh E."/>
            <person name="Stockel J."/>
            <person name="Liberton M."/>
            <person name="Min H."/>
            <person name="Sherman L.A."/>
            <person name="Pakrasi H.B."/>
        </authorList>
    </citation>
    <scope>NUCLEOTIDE SEQUENCE [LARGE SCALE GENOMIC DNA]</scope>
    <source>
        <strain>PCC 7425 / ATCC 29141</strain>
    </source>
</reference>
<gene>
    <name evidence="1" type="primary">rplT</name>
    <name evidence="1" type="synonym">rpl20</name>
    <name type="ordered locus">Cyan7425_1478</name>
</gene>
<feature type="chain" id="PRO_1000193954" description="Large ribosomal subunit protein bL20">
    <location>
        <begin position="1"/>
        <end position="118"/>
    </location>
</feature>
<organism>
    <name type="scientific">Cyanothece sp. (strain PCC 7425 / ATCC 29141)</name>
    <dbReference type="NCBI Taxonomy" id="395961"/>
    <lineage>
        <taxon>Bacteria</taxon>
        <taxon>Bacillati</taxon>
        <taxon>Cyanobacteriota</taxon>
        <taxon>Cyanophyceae</taxon>
        <taxon>Gomontiellales</taxon>
        <taxon>Cyanothecaceae</taxon>
        <taxon>Cyanothece</taxon>
    </lineage>
</organism>
<name>RL20_CYAP4</name>
<comment type="function">
    <text evidence="1">Binds directly to 23S ribosomal RNA and is necessary for the in vitro assembly process of the 50S ribosomal subunit. It is not involved in the protein synthesizing functions of that subunit.</text>
</comment>
<comment type="similarity">
    <text evidence="1">Belongs to the bacterial ribosomal protein bL20 family.</text>
</comment>
<sequence length="118" mass="13780">MTRVKRGNVARKRRNKILKLAKGFRGSHSRLFRTANQQVMKALRNAYRDRRKRKRDFRRLWIARINAASRLHGLSYSQLIGNLKKANVQLNRKMLAQLAVLDPVAFDQVVTVAAQTRR</sequence>